<proteinExistence type="inferred from homology"/>
<organism>
    <name type="scientific">Staphylococcus aureus (strain MSSA476)</name>
    <dbReference type="NCBI Taxonomy" id="282459"/>
    <lineage>
        <taxon>Bacteria</taxon>
        <taxon>Bacillati</taxon>
        <taxon>Bacillota</taxon>
        <taxon>Bacilli</taxon>
        <taxon>Bacillales</taxon>
        <taxon>Staphylococcaceae</taxon>
        <taxon>Staphylococcus</taxon>
    </lineage>
</organism>
<keyword id="KW-0479">Metal-binding</keyword>
<accession>Q6GAV8</accession>
<reference key="1">
    <citation type="journal article" date="2004" name="Proc. Natl. Acad. Sci. U.S.A.">
        <title>Complete genomes of two clinical Staphylococcus aureus strains: evidence for the rapid evolution of virulence and drug resistance.</title>
        <authorList>
            <person name="Holden M.T.G."/>
            <person name="Feil E.J."/>
            <person name="Lindsay J.A."/>
            <person name="Peacock S.J."/>
            <person name="Day N.P.J."/>
            <person name="Enright M.C."/>
            <person name="Foster T.J."/>
            <person name="Moore C.E."/>
            <person name="Hurst L."/>
            <person name="Atkin R."/>
            <person name="Barron A."/>
            <person name="Bason N."/>
            <person name="Bentley S.D."/>
            <person name="Chillingworth C."/>
            <person name="Chillingworth T."/>
            <person name="Churcher C."/>
            <person name="Clark L."/>
            <person name="Corton C."/>
            <person name="Cronin A."/>
            <person name="Doggett J."/>
            <person name="Dowd L."/>
            <person name="Feltwell T."/>
            <person name="Hance Z."/>
            <person name="Harris B."/>
            <person name="Hauser H."/>
            <person name="Holroyd S."/>
            <person name="Jagels K."/>
            <person name="James K.D."/>
            <person name="Lennard N."/>
            <person name="Line A."/>
            <person name="Mayes R."/>
            <person name="Moule S."/>
            <person name="Mungall K."/>
            <person name="Ormond D."/>
            <person name="Quail M.A."/>
            <person name="Rabbinowitsch E."/>
            <person name="Rutherford K.M."/>
            <person name="Sanders M."/>
            <person name="Sharp S."/>
            <person name="Simmonds M."/>
            <person name="Stevens K."/>
            <person name="Whitehead S."/>
            <person name="Barrell B.G."/>
            <person name="Spratt B.G."/>
            <person name="Parkhill J."/>
        </authorList>
    </citation>
    <scope>NUCLEOTIDE SEQUENCE [LARGE SCALE GENOMIC DNA]</scope>
    <source>
        <strain>MSSA476</strain>
    </source>
</reference>
<comment type="similarity">
    <text evidence="2">Belongs to the FAH family.</text>
</comment>
<protein>
    <recommendedName>
        <fullName>Uncharacterized protein SAS0838</fullName>
    </recommendedName>
</protein>
<dbReference type="EMBL" id="BX571857">
    <property type="protein sequence ID" value="CAG42613.1"/>
    <property type="molecule type" value="Genomic_DNA"/>
</dbReference>
<dbReference type="RefSeq" id="WP_000670752.1">
    <property type="nucleotide sequence ID" value="NC_002953.3"/>
</dbReference>
<dbReference type="SMR" id="Q6GAV8"/>
<dbReference type="KEGG" id="sas:SAS0838"/>
<dbReference type="HOGENOM" id="CLU_028458_3_1_9"/>
<dbReference type="GO" id="GO:0018773">
    <property type="term" value="F:acetylpyruvate hydrolase activity"/>
    <property type="evidence" value="ECO:0007669"/>
    <property type="project" value="TreeGrafter"/>
</dbReference>
<dbReference type="GO" id="GO:0046872">
    <property type="term" value="F:metal ion binding"/>
    <property type="evidence" value="ECO:0007669"/>
    <property type="project" value="UniProtKB-KW"/>
</dbReference>
<dbReference type="FunFam" id="3.90.850.10:FF:000010">
    <property type="entry name" value="FAA hydrolase family protein"/>
    <property type="match status" value="1"/>
</dbReference>
<dbReference type="Gene3D" id="3.90.850.10">
    <property type="entry name" value="Fumarylacetoacetase-like, C-terminal domain"/>
    <property type="match status" value="1"/>
</dbReference>
<dbReference type="InterPro" id="IPR011234">
    <property type="entry name" value="Fumarylacetoacetase-like_C"/>
</dbReference>
<dbReference type="InterPro" id="IPR036663">
    <property type="entry name" value="Fumarylacetoacetase_C_sf"/>
</dbReference>
<dbReference type="PANTHER" id="PTHR11820">
    <property type="entry name" value="ACYLPYRUVASE"/>
    <property type="match status" value="1"/>
</dbReference>
<dbReference type="PANTHER" id="PTHR11820:SF7">
    <property type="entry name" value="ACYLPYRUVASE FAHD1, MITOCHONDRIAL"/>
    <property type="match status" value="1"/>
</dbReference>
<dbReference type="Pfam" id="PF01557">
    <property type="entry name" value="FAA_hydrolase"/>
    <property type="match status" value="1"/>
</dbReference>
<dbReference type="SUPFAM" id="SSF56529">
    <property type="entry name" value="FAH"/>
    <property type="match status" value="1"/>
</dbReference>
<name>Y838_STAAS</name>
<gene>
    <name type="ordered locus">SAS0838</name>
</gene>
<evidence type="ECO:0000250" key="1"/>
<evidence type="ECO:0000305" key="2"/>
<sequence>MKFLSFKYNDKTSYGVKVKREDAVWDLTQVFADFAEGDFHPKTLLAGLQQNHTLDFQEQVRKAVVAAEDSGKAEDYKISFNDIEFLPPVTPPNNVIAFGRNYKDHANELNHEVEKLYVFTKAASSLTGDNATIPNHKDITDQLDYEGELGIVIGKSGEKIPKALALDYVYGYTIINDITDRKAQSEQDQAFLSKSLTGGCPMGPYIVTKDELPLPENVNIVTKVNNEIRQDGNTGEMILKIDELIEEISKYVALHPGDIIATGTPAGVGAGMQPPKFLQPGDEVKVTIDNIGTLTTYIAK</sequence>
<feature type="chain" id="PRO_0000303220" description="Uncharacterized protein SAS0838">
    <location>
        <begin position="1"/>
        <end position="300"/>
    </location>
</feature>
<feature type="binding site" evidence="1">
    <location>
        <position position="146"/>
    </location>
    <ligand>
        <name>a divalent metal cation</name>
        <dbReference type="ChEBI" id="CHEBI:60240"/>
    </ligand>
</feature>
<feature type="binding site" evidence="1">
    <location>
        <position position="148"/>
    </location>
    <ligand>
        <name>a divalent metal cation</name>
        <dbReference type="ChEBI" id="CHEBI:60240"/>
    </ligand>
</feature>
<feature type="binding site" evidence="1">
    <location>
        <position position="177"/>
    </location>
    <ligand>
        <name>a divalent metal cation</name>
        <dbReference type="ChEBI" id="CHEBI:60240"/>
    </ligand>
</feature>